<organism>
    <name type="scientific">Escherichia coli (strain SE11)</name>
    <dbReference type="NCBI Taxonomy" id="409438"/>
    <lineage>
        <taxon>Bacteria</taxon>
        <taxon>Pseudomonadati</taxon>
        <taxon>Pseudomonadota</taxon>
        <taxon>Gammaproteobacteria</taxon>
        <taxon>Enterobacterales</taxon>
        <taxon>Enterobacteriaceae</taxon>
        <taxon>Escherichia</taxon>
    </lineage>
</organism>
<reference key="1">
    <citation type="journal article" date="2008" name="DNA Res.">
        <title>Complete genome sequence and comparative analysis of the wild-type commensal Escherichia coli strain SE11 isolated from a healthy adult.</title>
        <authorList>
            <person name="Oshima K."/>
            <person name="Toh H."/>
            <person name="Ogura Y."/>
            <person name="Sasamoto H."/>
            <person name="Morita H."/>
            <person name="Park S.-H."/>
            <person name="Ooka T."/>
            <person name="Iyoda S."/>
            <person name="Taylor T.D."/>
            <person name="Hayashi T."/>
            <person name="Itoh K."/>
            <person name="Hattori M."/>
        </authorList>
    </citation>
    <scope>NUCLEOTIDE SEQUENCE [LARGE SCALE GENOMIC DNA]</scope>
    <source>
        <strain>SE11</strain>
    </source>
</reference>
<proteinExistence type="inferred from homology"/>
<name>YIHI_ECOSE</name>
<comment type="function">
    <text evidence="1">A GTPase-activating protein (GAP) that modifies Der/EngA GTPase function. May play a role in ribosome biogenesis.</text>
</comment>
<comment type="subunit">
    <text evidence="1">Interacts with Der.</text>
</comment>
<comment type="similarity">
    <text evidence="1">Belongs to the YihI family.</text>
</comment>
<protein>
    <recommendedName>
        <fullName evidence="1">Der GTPase-activating protein YihI</fullName>
    </recommendedName>
</protein>
<keyword id="KW-0343">GTPase activation</keyword>
<keyword id="KW-0690">Ribosome biogenesis</keyword>
<evidence type="ECO:0000255" key="1">
    <source>
        <dbReference type="HAMAP-Rule" id="MF_01058"/>
    </source>
</evidence>
<evidence type="ECO:0000256" key="2">
    <source>
        <dbReference type="SAM" id="MobiDB-lite"/>
    </source>
</evidence>
<dbReference type="EMBL" id="AP009240">
    <property type="protein sequence ID" value="BAG79673.1"/>
    <property type="molecule type" value="Genomic_DNA"/>
</dbReference>
<dbReference type="RefSeq" id="WP_001295266.1">
    <property type="nucleotide sequence ID" value="NC_011415.1"/>
</dbReference>
<dbReference type="SMR" id="B6I4K3"/>
<dbReference type="GeneID" id="75204333"/>
<dbReference type="KEGG" id="ecy:ECSE_4149"/>
<dbReference type="HOGENOM" id="CLU_094104_2_0_6"/>
<dbReference type="Proteomes" id="UP000008199">
    <property type="component" value="Chromosome"/>
</dbReference>
<dbReference type="GO" id="GO:0005096">
    <property type="term" value="F:GTPase activator activity"/>
    <property type="evidence" value="ECO:0007669"/>
    <property type="project" value="UniProtKB-KW"/>
</dbReference>
<dbReference type="GO" id="GO:0042254">
    <property type="term" value="P:ribosome biogenesis"/>
    <property type="evidence" value="ECO:0007669"/>
    <property type="project" value="UniProtKB-KW"/>
</dbReference>
<dbReference type="HAMAP" id="MF_01058">
    <property type="entry name" value="GAP_YihI"/>
    <property type="match status" value="1"/>
</dbReference>
<dbReference type="InterPro" id="IPR007336">
    <property type="entry name" value="YihI"/>
</dbReference>
<dbReference type="NCBIfam" id="NF003560">
    <property type="entry name" value="PRK05244.1-1"/>
    <property type="match status" value="1"/>
</dbReference>
<dbReference type="Pfam" id="PF04220">
    <property type="entry name" value="YihI"/>
    <property type="match status" value="1"/>
</dbReference>
<accession>B6I4K3</accession>
<feature type="chain" id="PRO_1000136384" description="Der GTPase-activating protein YihI">
    <location>
        <begin position="1"/>
        <end position="169"/>
    </location>
</feature>
<feature type="region of interest" description="Disordered" evidence="2">
    <location>
        <begin position="1"/>
        <end position="98"/>
    </location>
</feature>
<feature type="region of interest" description="Disordered" evidence="2">
    <location>
        <begin position="144"/>
        <end position="169"/>
    </location>
</feature>
<feature type="compositionally biased region" description="Basic residues" evidence="2">
    <location>
        <begin position="10"/>
        <end position="19"/>
    </location>
</feature>
<feature type="compositionally biased region" description="Basic and acidic residues" evidence="2">
    <location>
        <begin position="20"/>
        <end position="30"/>
    </location>
</feature>
<feature type="compositionally biased region" description="Basic residues" evidence="2">
    <location>
        <begin position="31"/>
        <end position="40"/>
    </location>
</feature>
<feature type="compositionally biased region" description="Polar residues" evidence="2">
    <location>
        <begin position="49"/>
        <end position="58"/>
    </location>
</feature>
<feature type="compositionally biased region" description="Acidic residues" evidence="2">
    <location>
        <begin position="147"/>
        <end position="159"/>
    </location>
</feature>
<feature type="compositionally biased region" description="Basic and acidic residues" evidence="2">
    <location>
        <begin position="160"/>
        <end position="169"/>
    </location>
</feature>
<gene>
    <name evidence="1" type="primary">yihI</name>
    <name type="ordered locus">ECSE_4149</name>
</gene>
<sequence>MKPSSSNSRSKGHAKARRKTREELDQEARDRKRQKKRRGHAPGSRAAGGNTTSGSKGQNAPKDPRIGSKTPIPLGVTEKVTKQHKPKSEKPMLSPQAELELLETDERLDALLERLEAGETLSAEEQSWVDAKLDRIDELMQKLGLSYDDDEEEEEDEKQEDMMRLLRGN</sequence>